<name>ITPA_PEDHC</name>
<protein>
    <recommendedName>
        <fullName evidence="1">Inosine triphosphate pyrophosphatase</fullName>
        <shortName evidence="1">ITPase</shortName>
        <shortName evidence="1">Inosine triphosphatase</shortName>
        <ecNumber evidence="1">3.6.1.66</ecNumber>
    </recommendedName>
    <alternativeName>
        <fullName evidence="1">Non-canonical purine NTP pyrophosphatase</fullName>
    </alternativeName>
    <alternativeName>
        <fullName evidence="1">Non-standard purine NTP pyrophosphatase</fullName>
    </alternativeName>
    <alternativeName>
        <fullName evidence="1">Nucleoside-triphosphate diphosphatase</fullName>
    </alternativeName>
    <alternativeName>
        <fullName evidence="1">Nucleoside-triphosphate pyrophosphatase</fullName>
        <shortName evidence="1">NTPase</shortName>
    </alternativeName>
    <alternativeName>
        <fullName evidence="1">XTP/dITP diphosphatase</fullName>
    </alternativeName>
</protein>
<accession>E0VVF6</accession>
<organism>
    <name type="scientific">Pediculus humanus subsp. corporis</name>
    <name type="common">Body louse</name>
    <dbReference type="NCBI Taxonomy" id="121224"/>
    <lineage>
        <taxon>Eukaryota</taxon>
        <taxon>Metazoa</taxon>
        <taxon>Ecdysozoa</taxon>
        <taxon>Arthropoda</taxon>
        <taxon>Hexapoda</taxon>
        <taxon>Insecta</taxon>
        <taxon>Pterygota</taxon>
        <taxon>Neoptera</taxon>
        <taxon>Paraneoptera</taxon>
        <taxon>Psocodea</taxon>
        <taxon>Phthiraptera</taxon>
        <taxon>Anoplura</taxon>
        <taxon>Pediculidae</taxon>
        <taxon>Pediculus</taxon>
    </lineage>
</organism>
<gene>
    <name type="ORF">Phum_PHUM462900</name>
</gene>
<reference key="1">
    <citation type="journal article" date="2010" name="Proc. Natl. Acad. Sci. U.S.A.">
        <title>Genome sequences of the human body louse and its primary endosymbiont provide insights into the permanent parasitic lifestyle.</title>
        <authorList>
            <person name="Kirkness E.F."/>
            <person name="Haas B.J."/>
            <person name="Sun W."/>
            <person name="Braig H.R."/>
            <person name="Perotti M.A."/>
            <person name="Clark J.M."/>
            <person name="Lee S.H."/>
            <person name="Robertson H.M."/>
            <person name="Kennedy R.C."/>
            <person name="Elhaik E."/>
            <person name="Gerlach D."/>
            <person name="Kriventseva E.V."/>
            <person name="Elsik C.G."/>
            <person name="Graur D."/>
            <person name="Hill C.A."/>
            <person name="Veenstra J.A."/>
            <person name="Walenz B."/>
            <person name="Tubio J.M."/>
            <person name="Ribeiro J.M."/>
            <person name="Rozas J."/>
            <person name="Johnston J.S."/>
            <person name="Reese J.T."/>
            <person name="Popadic A."/>
            <person name="Tojo M."/>
            <person name="Raoult D."/>
            <person name="Reed D.L."/>
            <person name="Tomoyasu Y."/>
            <person name="Krause E."/>
            <person name="Mittapalli O."/>
            <person name="Margam V.M."/>
            <person name="Li H.M."/>
            <person name="Meyer J.M."/>
            <person name="Johnson R.M."/>
            <person name="Romero-Severson J."/>
            <person name="Vanzee J.P."/>
            <person name="Alvarez-Ponce D."/>
            <person name="Vieira F.G."/>
            <person name="Aguade M."/>
            <person name="Guirao-Rico S."/>
            <person name="Anzola J.M."/>
            <person name="Yoon K.S."/>
            <person name="Strycharz J.P."/>
            <person name="Unger M.F."/>
            <person name="Christley S."/>
            <person name="Lobo N.F."/>
            <person name="Seufferheld M.J."/>
            <person name="Wang N."/>
            <person name="Dasch G.A."/>
            <person name="Struchiner C.J."/>
            <person name="Madey G."/>
            <person name="Hannick L.I."/>
            <person name="Bidwell S."/>
            <person name="Joardar V."/>
            <person name="Caler E."/>
            <person name="Shao R."/>
            <person name="Barker S.C."/>
            <person name="Cameron S."/>
            <person name="Bruggner R.V."/>
            <person name="Regier A."/>
            <person name="Johnson J."/>
            <person name="Viswanathan L."/>
            <person name="Utterback T.R."/>
            <person name="Sutton G.G."/>
            <person name="Lawson D."/>
            <person name="Waterhouse R.M."/>
            <person name="Venter J.C."/>
            <person name="Strausberg R.L."/>
            <person name="Berenbaum M.R."/>
            <person name="Collins F.H."/>
            <person name="Zdobnov E.M."/>
            <person name="Pittendrigh B.R."/>
        </authorList>
    </citation>
    <scope>NUCLEOTIDE SEQUENCE [LARGE SCALE GENOMIC DNA]</scope>
    <source>
        <strain>USDA</strain>
    </source>
</reference>
<keyword id="KW-0963">Cytoplasm</keyword>
<keyword id="KW-0378">Hydrolase</keyword>
<keyword id="KW-0460">Magnesium</keyword>
<keyword id="KW-0464">Manganese</keyword>
<keyword id="KW-0479">Metal-binding</keyword>
<keyword id="KW-0546">Nucleotide metabolism</keyword>
<keyword id="KW-0547">Nucleotide-binding</keyword>
<keyword id="KW-1185">Reference proteome</keyword>
<evidence type="ECO:0000255" key="1">
    <source>
        <dbReference type="HAMAP-Rule" id="MF_03148"/>
    </source>
</evidence>
<dbReference type="EC" id="3.6.1.66" evidence="1"/>
<dbReference type="EMBL" id="DS235811">
    <property type="protein sequence ID" value="EEB17362.1"/>
    <property type="molecule type" value="Genomic_DNA"/>
</dbReference>
<dbReference type="RefSeq" id="XP_002430100.1">
    <property type="nucleotide sequence ID" value="XM_002430055.1"/>
</dbReference>
<dbReference type="SMR" id="E0VVF6"/>
<dbReference type="FunCoup" id="E0VVF6">
    <property type="interactions" value="1364"/>
</dbReference>
<dbReference type="STRING" id="121224.E0VVF6"/>
<dbReference type="EnsemblMetazoa" id="PHUM462900-RA">
    <property type="protein sequence ID" value="PHUM462900-PA"/>
    <property type="gene ID" value="PHUM462900"/>
</dbReference>
<dbReference type="GeneID" id="8238467"/>
<dbReference type="KEGG" id="phu:Phum_PHUM462900"/>
<dbReference type="CTD" id="8238467"/>
<dbReference type="VEuPathDB" id="VectorBase:PHUM462900"/>
<dbReference type="eggNOG" id="KOG3222">
    <property type="taxonomic scope" value="Eukaryota"/>
</dbReference>
<dbReference type="HOGENOM" id="CLU_082080_1_1_1"/>
<dbReference type="InParanoid" id="E0VVF6"/>
<dbReference type="OMA" id="YDPIFQP"/>
<dbReference type="OrthoDB" id="6288734at2759"/>
<dbReference type="PhylomeDB" id="E0VVF6"/>
<dbReference type="Proteomes" id="UP000009046">
    <property type="component" value="Unassembled WGS sequence"/>
</dbReference>
<dbReference type="GO" id="GO:0005737">
    <property type="term" value="C:cytoplasm"/>
    <property type="evidence" value="ECO:0007669"/>
    <property type="project" value="UniProtKB-SubCell"/>
</dbReference>
<dbReference type="GO" id="GO:0035870">
    <property type="term" value="F:dITP diphosphatase activity"/>
    <property type="evidence" value="ECO:0007669"/>
    <property type="project" value="RHEA"/>
</dbReference>
<dbReference type="GO" id="GO:0036220">
    <property type="term" value="F:ITP diphosphatase activity"/>
    <property type="evidence" value="ECO:0007669"/>
    <property type="project" value="RHEA"/>
</dbReference>
<dbReference type="GO" id="GO:0046872">
    <property type="term" value="F:metal ion binding"/>
    <property type="evidence" value="ECO:0007669"/>
    <property type="project" value="UniProtKB-KW"/>
</dbReference>
<dbReference type="GO" id="GO:0000166">
    <property type="term" value="F:nucleotide binding"/>
    <property type="evidence" value="ECO:0007669"/>
    <property type="project" value="UniProtKB-KW"/>
</dbReference>
<dbReference type="GO" id="GO:0036222">
    <property type="term" value="F:XTP diphosphatase activity"/>
    <property type="evidence" value="ECO:0007669"/>
    <property type="project" value="RHEA"/>
</dbReference>
<dbReference type="GO" id="GO:0009204">
    <property type="term" value="P:deoxyribonucleoside triphosphate catabolic process"/>
    <property type="evidence" value="ECO:0007669"/>
    <property type="project" value="UniProtKB-UniRule"/>
</dbReference>
<dbReference type="GO" id="GO:0009117">
    <property type="term" value="P:nucleotide metabolic process"/>
    <property type="evidence" value="ECO:0007669"/>
    <property type="project" value="UniProtKB-KW"/>
</dbReference>
<dbReference type="CDD" id="cd00515">
    <property type="entry name" value="HAM1"/>
    <property type="match status" value="1"/>
</dbReference>
<dbReference type="FunFam" id="3.90.950.10:FF:000003">
    <property type="entry name" value="Inosine triphosphate pyrophosphatase"/>
    <property type="match status" value="1"/>
</dbReference>
<dbReference type="Gene3D" id="3.90.950.10">
    <property type="match status" value="1"/>
</dbReference>
<dbReference type="HAMAP" id="MF_03148">
    <property type="entry name" value="HAM1_NTPase"/>
    <property type="match status" value="1"/>
</dbReference>
<dbReference type="InterPro" id="IPR027502">
    <property type="entry name" value="ITPase"/>
</dbReference>
<dbReference type="InterPro" id="IPR029001">
    <property type="entry name" value="ITPase-like_fam"/>
</dbReference>
<dbReference type="InterPro" id="IPR002637">
    <property type="entry name" value="RdgB/HAM1"/>
</dbReference>
<dbReference type="NCBIfam" id="TIGR00042">
    <property type="entry name" value="RdgB/HAM1 family non-canonical purine NTP pyrophosphatase"/>
    <property type="match status" value="1"/>
</dbReference>
<dbReference type="PANTHER" id="PTHR11067:SF9">
    <property type="entry name" value="INOSINE TRIPHOSPHATE PYROPHOSPHATASE"/>
    <property type="match status" value="1"/>
</dbReference>
<dbReference type="PANTHER" id="PTHR11067">
    <property type="entry name" value="INOSINE TRIPHOSPHATE PYROPHOSPHATASE/HAM1 PROTEIN"/>
    <property type="match status" value="1"/>
</dbReference>
<dbReference type="Pfam" id="PF01725">
    <property type="entry name" value="Ham1p_like"/>
    <property type="match status" value="1"/>
</dbReference>
<dbReference type="SUPFAM" id="SSF52972">
    <property type="entry name" value="ITPase-like"/>
    <property type="match status" value="1"/>
</dbReference>
<comment type="function">
    <text evidence="1">Pyrophosphatase that hydrolyzes non-canonical purine nucleotides such as inosine triphosphate (ITP), deoxyinosine triphosphate (dITP) or xanthosine 5'-triphosphate (XTP) to their respective monophosphate derivatives. The enzyme does not distinguish between the deoxy- and ribose forms. Probably excludes non-canonical purines from RNA and DNA precursor pools, thus preventing their incorporation into RNA and DNA and avoiding chromosomal lesions.</text>
</comment>
<comment type="catalytic activity">
    <reaction evidence="1">
        <text>ITP + H2O = IMP + diphosphate + H(+)</text>
        <dbReference type="Rhea" id="RHEA:29399"/>
        <dbReference type="ChEBI" id="CHEBI:15377"/>
        <dbReference type="ChEBI" id="CHEBI:15378"/>
        <dbReference type="ChEBI" id="CHEBI:33019"/>
        <dbReference type="ChEBI" id="CHEBI:58053"/>
        <dbReference type="ChEBI" id="CHEBI:61402"/>
        <dbReference type="EC" id="3.6.1.66"/>
    </reaction>
    <physiologicalReaction direction="left-to-right" evidence="1">
        <dbReference type="Rhea" id="RHEA:29400"/>
    </physiologicalReaction>
</comment>
<comment type="catalytic activity">
    <reaction evidence="1">
        <text>dITP + H2O = dIMP + diphosphate + H(+)</text>
        <dbReference type="Rhea" id="RHEA:28342"/>
        <dbReference type="ChEBI" id="CHEBI:15377"/>
        <dbReference type="ChEBI" id="CHEBI:15378"/>
        <dbReference type="ChEBI" id="CHEBI:33019"/>
        <dbReference type="ChEBI" id="CHEBI:61194"/>
        <dbReference type="ChEBI" id="CHEBI:61382"/>
        <dbReference type="EC" id="3.6.1.66"/>
    </reaction>
    <physiologicalReaction direction="left-to-right" evidence="1">
        <dbReference type="Rhea" id="RHEA:28343"/>
    </physiologicalReaction>
</comment>
<comment type="catalytic activity">
    <reaction evidence="1">
        <text>XTP + H2O = XMP + diphosphate + H(+)</text>
        <dbReference type="Rhea" id="RHEA:28610"/>
        <dbReference type="ChEBI" id="CHEBI:15377"/>
        <dbReference type="ChEBI" id="CHEBI:15378"/>
        <dbReference type="ChEBI" id="CHEBI:33019"/>
        <dbReference type="ChEBI" id="CHEBI:57464"/>
        <dbReference type="ChEBI" id="CHEBI:61314"/>
        <dbReference type="EC" id="3.6.1.66"/>
    </reaction>
    <physiologicalReaction direction="left-to-right" evidence="1">
        <dbReference type="Rhea" id="RHEA:28611"/>
    </physiologicalReaction>
</comment>
<comment type="cofactor">
    <cofactor evidence="1">
        <name>Mg(2+)</name>
        <dbReference type="ChEBI" id="CHEBI:18420"/>
    </cofactor>
    <cofactor evidence="1">
        <name>Mn(2+)</name>
        <dbReference type="ChEBI" id="CHEBI:29035"/>
    </cofactor>
    <text evidence="1">Binds 1 divalent metal cation per subunit; can use either Mg(2+) or Mn(2+).</text>
</comment>
<comment type="subunit">
    <text evidence="1">Homodimer.</text>
</comment>
<comment type="subcellular location">
    <subcellularLocation>
        <location evidence="1">Cytoplasm</location>
    </subcellularLocation>
</comment>
<comment type="similarity">
    <text evidence="1">Belongs to the HAM1 NTPase family.</text>
</comment>
<feature type="chain" id="PRO_0000413110" description="Inosine triphosphate pyrophosphatase">
    <location>
        <begin position="1"/>
        <end position="190"/>
    </location>
</feature>
<feature type="binding site" evidence="1">
    <location>
        <begin position="9"/>
        <end position="14"/>
    </location>
    <ligand>
        <name>ITP</name>
        <dbReference type="ChEBI" id="CHEBI:61402"/>
    </ligand>
</feature>
<feature type="binding site" evidence="1">
    <location>
        <position position="39"/>
    </location>
    <ligand>
        <name>Mg(2+)</name>
        <dbReference type="ChEBI" id="CHEBI:18420"/>
    </ligand>
</feature>
<feature type="binding site" evidence="1">
    <location>
        <position position="51"/>
    </location>
    <ligand>
        <name>ITP</name>
        <dbReference type="ChEBI" id="CHEBI:61402"/>
    </ligand>
</feature>
<feature type="binding site" evidence="1">
    <location>
        <begin position="67"/>
        <end position="68"/>
    </location>
    <ligand>
        <name>ITP</name>
        <dbReference type="ChEBI" id="CHEBI:61402"/>
    </ligand>
</feature>
<feature type="binding site" evidence="1">
    <location>
        <position position="84"/>
    </location>
    <ligand>
        <name>ITP</name>
        <dbReference type="ChEBI" id="CHEBI:61402"/>
    </ligand>
</feature>
<feature type="binding site" evidence="1">
    <location>
        <begin position="144"/>
        <end position="147"/>
    </location>
    <ligand>
        <name>ITP</name>
        <dbReference type="ChEBI" id="CHEBI:61402"/>
    </ligand>
</feature>
<feature type="binding site" evidence="1">
    <location>
        <position position="167"/>
    </location>
    <ligand>
        <name>ITP</name>
        <dbReference type="ChEBI" id="CHEBI:61402"/>
    </ligand>
</feature>
<feature type="binding site" evidence="1">
    <location>
        <begin position="172"/>
        <end position="173"/>
    </location>
    <ligand>
        <name>ITP</name>
        <dbReference type="ChEBI" id="CHEBI:61402"/>
    </ligand>
</feature>
<proteinExistence type="inferred from homology"/>
<sequence>MSRPLVFVTGNAKKLEEVVTILGNNFPAKLVSQSVDLPELQGEIEDICKKKCLEAAKIVQGPVLVEDTCLCFNALGGLPGPYIKWFLEKLGPEGLSKLLTGWEDKTATAICTIAYSSGDQNEDVILFQGQTTGKIVEPRGTRIFGWDPCFLPDGYDQTYAEMPKSEKNKISHRTKAVEKLRTYFTEKLNF</sequence>